<gene>
    <name evidence="1" type="primary">plsX</name>
    <name type="ordered locus">LSL_0623</name>
</gene>
<organism>
    <name type="scientific">Ligilactobacillus salivarius (strain UCC118)</name>
    <name type="common">Lactobacillus salivarius</name>
    <dbReference type="NCBI Taxonomy" id="362948"/>
    <lineage>
        <taxon>Bacteria</taxon>
        <taxon>Bacillati</taxon>
        <taxon>Bacillota</taxon>
        <taxon>Bacilli</taxon>
        <taxon>Lactobacillales</taxon>
        <taxon>Lactobacillaceae</taxon>
        <taxon>Ligilactobacillus</taxon>
    </lineage>
</organism>
<dbReference type="EC" id="2.3.1.274" evidence="1"/>
<dbReference type="EMBL" id="CP000233">
    <property type="protein sequence ID" value="ABD99433.1"/>
    <property type="molecule type" value="Genomic_DNA"/>
</dbReference>
<dbReference type="RefSeq" id="WP_011475845.1">
    <property type="nucleotide sequence ID" value="NC_007929.1"/>
</dbReference>
<dbReference type="RefSeq" id="YP_535516.1">
    <property type="nucleotide sequence ID" value="NC_007929.1"/>
</dbReference>
<dbReference type="SMR" id="Q1WUA2"/>
<dbReference type="STRING" id="362948.LSL_0623"/>
<dbReference type="KEGG" id="lsl:LSL_0623"/>
<dbReference type="PATRIC" id="fig|362948.14.peg.703"/>
<dbReference type="HOGENOM" id="CLU_039379_1_1_9"/>
<dbReference type="OrthoDB" id="9806408at2"/>
<dbReference type="UniPathway" id="UPA00085"/>
<dbReference type="Proteomes" id="UP000006559">
    <property type="component" value="Chromosome"/>
</dbReference>
<dbReference type="GO" id="GO:0005737">
    <property type="term" value="C:cytoplasm"/>
    <property type="evidence" value="ECO:0007669"/>
    <property type="project" value="UniProtKB-SubCell"/>
</dbReference>
<dbReference type="GO" id="GO:0043811">
    <property type="term" value="F:phosphate:acyl-[acyl carrier protein] acyltransferase activity"/>
    <property type="evidence" value="ECO:0007669"/>
    <property type="project" value="UniProtKB-UniRule"/>
</dbReference>
<dbReference type="GO" id="GO:0006633">
    <property type="term" value="P:fatty acid biosynthetic process"/>
    <property type="evidence" value="ECO:0007669"/>
    <property type="project" value="UniProtKB-UniRule"/>
</dbReference>
<dbReference type="GO" id="GO:0008654">
    <property type="term" value="P:phospholipid biosynthetic process"/>
    <property type="evidence" value="ECO:0007669"/>
    <property type="project" value="UniProtKB-KW"/>
</dbReference>
<dbReference type="Gene3D" id="3.40.718.10">
    <property type="entry name" value="Isopropylmalate Dehydrogenase"/>
    <property type="match status" value="1"/>
</dbReference>
<dbReference type="HAMAP" id="MF_00019">
    <property type="entry name" value="PlsX"/>
    <property type="match status" value="1"/>
</dbReference>
<dbReference type="InterPro" id="IPR003664">
    <property type="entry name" value="FA_synthesis"/>
</dbReference>
<dbReference type="InterPro" id="IPR012281">
    <property type="entry name" value="Phospholipid_synth_PlsX-like"/>
</dbReference>
<dbReference type="NCBIfam" id="TIGR00182">
    <property type="entry name" value="plsX"/>
    <property type="match status" value="1"/>
</dbReference>
<dbReference type="PANTHER" id="PTHR30100">
    <property type="entry name" value="FATTY ACID/PHOSPHOLIPID SYNTHESIS PROTEIN PLSX"/>
    <property type="match status" value="1"/>
</dbReference>
<dbReference type="PANTHER" id="PTHR30100:SF1">
    <property type="entry name" value="PHOSPHATE ACYLTRANSFERASE"/>
    <property type="match status" value="1"/>
</dbReference>
<dbReference type="Pfam" id="PF02504">
    <property type="entry name" value="FA_synthesis"/>
    <property type="match status" value="1"/>
</dbReference>
<dbReference type="PIRSF" id="PIRSF002465">
    <property type="entry name" value="Phsphlp_syn_PlsX"/>
    <property type="match status" value="1"/>
</dbReference>
<dbReference type="SUPFAM" id="SSF53659">
    <property type="entry name" value="Isocitrate/Isopropylmalate dehydrogenase-like"/>
    <property type="match status" value="1"/>
</dbReference>
<protein>
    <recommendedName>
        <fullName evidence="1">Phosphate acyltransferase</fullName>
        <ecNumber evidence="1">2.3.1.274</ecNumber>
    </recommendedName>
    <alternativeName>
        <fullName evidence="1">Acyl-ACP phosphotransacylase</fullName>
    </alternativeName>
    <alternativeName>
        <fullName evidence="1">Acyl-[acyl-carrier-protein]--phosphate acyltransferase</fullName>
    </alternativeName>
    <alternativeName>
        <fullName evidence="1">Phosphate-acyl-ACP acyltransferase</fullName>
    </alternativeName>
</protein>
<proteinExistence type="inferred from homology"/>
<sequence>MKKIAVDAMGGDFAPQSVVEGVEKARNKYPDLRFMLFGDEQKIREILTSDKNIEIIQTTEVIDMNDEPVKAIRRKKDSSLVRAAYAVKEGKADALFSCGNTGALLAAGLLIVGRIKGITRPGLLSTLPVLTKEGGAFNLLDSGANADNKPEQLYQYALLGKYYAESVRNIKNPRIGLLNNGTEPHKGSKLTLEAHNLIAADSSINFVGNVESKDILKGVCDVVVADGFTGNAVLKAIEGTAGTAMHLLKDTIMSAGLLGKIGGLLLKPSIMKIRNKMSASQYGGAVLLGAKAPVVKAHGASDAETVYYTVKQINDMLENDMLSKFTDYFNKNV</sequence>
<name>PLSX_LIGS1</name>
<keyword id="KW-0963">Cytoplasm</keyword>
<keyword id="KW-0444">Lipid biosynthesis</keyword>
<keyword id="KW-0443">Lipid metabolism</keyword>
<keyword id="KW-0594">Phospholipid biosynthesis</keyword>
<keyword id="KW-1208">Phospholipid metabolism</keyword>
<keyword id="KW-1185">Reference proteome</keyword>
<keyword id="KW-0808">Transferase</keyword>
<reference key="1">
    <citation type="journal article" date="2006" name="Proc. Natl. Acad. Sci. U.S.A.">
        <title>Multireplicon genome architecture of Lactobacillus salivarius.</title>
        <authorList>
            <person name="Claesson M.J."/>
            <person name="Li Y."/>
            <person name="Leahy S."/>
            <person name="Canchaya C."/>
            <person name="van Pijkeren J.P."/>
            <person name="Cerdeno-Tarraga A.M."/>
            <person name="Parkhill J."/>
            <person name="Flynn S."/>
            <person name="O'Sullivan G.C."/>
            <person name="Collins J.K."/>
            <person name="Higgins D."/>
            <person name="Shanahan F."/>
            <person name="Fitzgerald G.F."/>
            <person name="van Sinderen D."/>
            <person name="O'Toole P.W."/>
        </authorList>
    </citation>
    <scope>NUCLEOTIDE SEQUENCE [LARGE SCALE GENOMIC DNA]</scope>
    <source>
        <strain>UCC118</strain>
    </source>
</reference>
<comment type="function">
    <text evidence="1">Catalyzes the reversible formation of acyl-phosphate (acyl-PO(4)) from acyl-[acyl-carrier-protein] (acyl-ACP). This enzyme utilizes acyl-ACP as fatty acyl donor, but not acyl-CoA.</text>
</comment>
<comment type="catalytic activity">
    <reaction evidence="1">
        <text>a fatty acyl-[ACP] + phosphate = an acyl phosphate + holo-[ACP]</text>
        <dbReference type="Rhea" id="RHEA:42292"/>
        <dbReference type="Rhea" id="RHEA-COMP:9685"/>
        <dbReference type="Rhea" id="RHEA-COMP:14125"/>
        <dbReference type="ChEBI" id="CHEBI:43474"/>
        <dbReference type="ChEBI" id="CHEBI:59918"/>
        <dbReference type="ChEBI" id="CHEBI:64479"/>
        <dbReference type="ChEBI" id="CHEBI:138651"/>
        <dbReference type="EC" id="2.3.1.274"/>
    </reaction>
</comment>
<comment type="pathway">
    <text evidence="1">Lipid metabolism; phospholipid metabolism.</text>
</comment>
<comment type="subunit">
    <text evidence="1">Homodimer. Probably interacts with PlsY.</text>
</comment>
<comment type="subcellular location">
    <subcellularLocation>
        <location evidence="1">Cytoplasm</location>
    </subcellularLocation>
    <text evidence="1">Associated with the membrane possibly through PlsY.</text>
</comment>
<comment type="similarity">
    <text evidence="1">Belongs to the PlsX family.</text>
</comment>
<feature type="chain" id="PRO_1000001780" description="Phosphate acyltransferase">
    <location>
        <begin position="1"/>
        <end position="333"/>
    </location>
</feature>
<accession>Q1WUA2</accession>
<evidence type="ECO:0000255" key="1">
    <source>
        <dbReference type="HAMAP-Rule" id="MF_00019"/>
    </source>
</evidence>